<sequence length="490" mass="53125">MARFELQKLYIDGGYVDASNPETFDAINPANGEVLAQIQRAGKDDVERAVVAAEKGQKIWAAMTAVERSRILRRAVDILRERNDELAALETLDTGKAISETRYVDIVTGADVLEYYAGLVPAIEGEQIPLRDSSFVYTRREPLGVVAGIGAWNYPIQIALWKSAPALAAGNAMIFKPSEVTSLTTLKLAEIYTEAGVPNGVFNVLTGSGREVGTWITEHPRIEKVSFTGGTDTGKKVMASASSSSLKEVTMELGGKSPLIVFDDADLDRAADIAMMANFYSSGQVCTNGTRVFVPNALKAEFEAKILERVKRIRAGNPEDENINFGPLVSFEHMESVLGYIAKGKEQGARLLCGGDRLTGGVFDKGAFVAPTVFTDCTDEMTIVREEIFGPVMSILGYDTEDEVVRRANDTDFGLAAGIVTRDLNRAHRVIHLLEAGICWINAWGESAAQMPVGGYKQSGVGRENGISSLAQYTRIKSVQIELGDYASVF</sequence>
<protein>
    <recommendedName>
        <fullName evidence="1">Betaine aldehyde dehydrogenase</fullName>
        <shortName evidence="1">BADH</shortName>
        <ecNumber evidence="1">1.2.1.8</ecNumber>
    </recommendedName>
</protein>
<keyword id="KW-0479">Metal-binding</keyword>
<keyword id="KW-0520">NAD</keyword>
<keyword id="KW-0521">NADP</keyword>
<keyword id="KW-0558">Oxidation</keyword>
<keyword id="KW-0560">Oxidoreductase</keyword>
<keyword id="KW-0630">Potassium</keyword>
<dbReference type="EC" id="1.2.1.8" evidence="1"/>
<dbReference type="EMBL" id="CP000075">
    <property type="protein sequence ID" value="AAY39760.1"/>
    <property type="molecule type" value="Genomic_DNA"/>
</dbReference>
<dbReference type="RefSeq" id="WP_003393629.1">
    <property type="nucleotide sequence ID" value="NC_007005.1"/>
</dbReference>
<dbReference type="RefSeq" id="YP_237798.1">
    <property type="nucleotide sequence ID" value="NC_007005.1"/>
</dbReference>
<dbReference type="SMR" id="Q4ZM62"/>
<dbReference type="STRING" id="205918.Psyr_4733"/>
<dbReference type="GeneID" id="77280576"/>
<dbReference type="KEGG" id="psb:Psyr_4733"/>
<dbReference type="PATRIC" id="fig|205918.7.peg.4881"/>
<dbReference type="eggNOG" id="COG1012">
    <property type="taxonomic scope" value="Bacteria"/>
</dbReference>
<dbReference type="HOGENOM" id="CLU_005391_0_0_6"/>
<dbReference type="OrthoDB" id="9812625at2"/>
<dbReference type="UniPathway" id="UPA00529">
    <property type="reaction ID" value="UER00386"/>
</dbReference>
<dbReference type="Proteomes" id="UP000000426">
    <property type="component" value="Chromosome"/>
</dbReference>
<dbReference type="GO" id="GO:0008802">
    <property type="term" value="F:betaine-aldehyde dehydrogenase (NAD+) activity"/>
    <property type="evidence" value="ECO:0007669"/>
    <property type="project" value="UniProtKB-UniRule"/>
</dbReference>
<dbReference type="GO" id="GO:0046872">
    <property type="term" value="F:metal ion binding"/>
    <property type="evidence" value="ECO:0007669"/>
    <property type="project" value="UniProtKB-KW"/>
</dbReference>
<dbReference type="GO" id="GO:0019285">
    <property type="term" value="P:glycine betaine biosynthetic process from choline"/>
    <property type="evidence" value="ECO:0007669"/>
    <property type="project" value="UniProtKB-UniRule"/>
</dbReference>
<dbReference type="CDD" id="cd07090">
    <property type="entry name" value="ALDH_F9_TMBADH"/>
    <property type="match status" value="1"/>
</dbReference>
<dbReference type="FunFam" id="3.40.309.10:FF:000014">
    <property type="entry name" value="NAD/NADP-dependent betaine aldehyde dehydrogenase"/>
    <property type="match status" value="1"/>
</dbReference>
<dbReference type="FunFam" id="3.40.605.10:FF:000007">
    <property type="entry name" value="NAD/NADP-dependent betaine aldehyde dehydrogenase"/>
    <property type="match status" value="1"/>
</dbReference>
<dbReference type="Gene3D" id="3.40.605.10">
    <property type="entry name" value="Aldehyde Dehydrogenase, Chain A, domain 1"/>
    <property type="match status" value="1"/>
</dbReference>
<dbReference type="Gene3D" id="3.40.309.10">
    <property type="entry name" value="Aldehyde Dehydrogenase, Chain A, domain 2"/>
    <property type="match status" value="1"/>
</dbReference>
<dbReference type="HAMAP" id="MF_00804">
    <property type="entry name" value="BADH"/>
    <property type="match status" value="1"/>
</dbReference>
<dbReference type="InterPro" id="IPR016161">
    <property type="entry name" value="Ald_DH/histidinol_DH"/>
</dbReference>
<dbReference type="InterPro" id="IPR016163">
    <property type="entry name" value="Ald_DH_C"/>
</dbReference>
<dbReference type="InterPro" id="IPR016160">
    <property type="entry name" value="Ald_DH_CS_CYS"/>
</dbReference>
<dbReference type="InterPro" id="IPR029510">
    <property type="entry name" value="Ald_DH_CS_GLU"/>
</dbReference>
<dbReference type="InterPro" id="IPR016162">
    <property type="entry name" value="Ald_DH_N"/>
</dbReference>
<dbReference type="InterPro" id="IPR015590">
    <property type="entry name" value="Aldehyde_DH_dom"/>
</dbReference>
<dbReference type="InterPro" id="IPR011264">
    <property type="entry name" value="BADH"/>
</dbReference>
<dbReference type="NCBIfam" id="TIGR01804">
    <property type="entry name" value="BADH"/>
    <property type="match status" value="1"/>
</dbReference>
<dbReference type="NCBIfam" id="NF009725">
    <property type="entry name" value="PRK13252.1"/>
    <property type="match status" value="1"/>
</dbReference>
<dbReference type="PANTHER" id="PTHR11699">
    <property type="entry name" value="ALDEHYDE DEHYDROGENASE-RELATED"/>
    <property type="match status" value="1"/>
</dbReference>
<dbReference type="Pfam" id="PF00171">
    <property type="entry name" value="Aldedh"/>
    <property type="match status" value="1"/>
</dbReference>
<dbReference type="SUPFAM" id="SSF53720">
    <property type="entry name" value="ALDH-like"/>
    <property type="match status" value="1"/>
</dbReference>
<dbReference type="PROSITE" id="PS00070">
    <property type="entry name" value="ALDEHYDE_DEHYDR_CYS"/>
    <property type="match status" value="1"/>
</dbReference>
<dbReference type="PROSITE" id="PS00687">
    <property type="entry name" value="ALDEHYDE_DEHYDR_GLU"/>
    <property type="match status" value="1"/>
</dbReference>
<name>BETB_PSEU2</name>
<organism>
    <name type="scientific">Pseudomonas syringae pv. syringae (strain B728a)</name>
    <dbReference type="NCBI Taxonomy" id="205918"/>
    <lineage>
        <taxon>Bacteria</taxon>
        <taxon>Pseudomonadati</taxon>
        <taxon>Pseudomonadota</taxon>
        <taxon>Gammaproteobacteria</taxon>
        <taxon>Pseudomonadales</taxon>
        <taxon>Pseudomonadaceae</taxon>
        <taxon>Pseudomonas</taxon>
        <taxon>Pseudomonas syringae</taxon>
    </lineage>
</organism>
<comment type="function">
    <text evidence="1">Involved in the biosynthesis of the osmoprotectant glycine betaine. Catalyzes the irreversible oxidation of betaine aldehyde to the corresponding acid.</text>
</comment>
<comment type="catalytic activity">
    <reaction evidence="1">
        <text>betaine aldehyde + NAD(+) + H2O = glycine betaine + NADH + 2 H(+)</text>
        <dbReference type="Rhea" id="RHEA:15305"/>
        <dbReference type="ChEBI" id="CHEBI:15377"/>
        <dbReference type="ChEBI" id="CHEBI:15378"/>
        <dbReference type="ChEBI" id="CHEBI:15710"/>
        <dbReference type="ChEBI" id="CHEBI:17750"/>
        <dbReference type="ChEBI" id="CHEBI:57540"/>
        <dbReference type="ChEBI" id="CHEBI:57945"/>
        <dbReference type="EC" id="1.2.1.8"/>
    </reaction>
    <physiologicalReaction direction="left-to-right" evidence="1">
        <dbReference type="Rhea" id="RHEA:15306"/>
    </physiologicalReaction>
</comment>
<comment type="cofactor">
    <cofactor evidence="1">
        <name>K(+)</name>
        <dbReference type="ChEBI" id="CHEBI:29103"/>
    </cofactor>
    <text evidence="1">Binds 2 potassium ions per subunit.</text>
</comment>
<comment type="pathway">
    <text evidence="1">Amine and polyamine biosynthesis; betaine biosynthesis via choline pathway; betaine from betaine aldehyde: step 1/1.</text>
</comment>
<comment type="subunit">
    <text evidence="1">Dimer of dimers.</text>
</comment>
<comment type="similarity">
    <text evidence="1">Belongs to the aldehyde dehydrogenase family.</text>
</comment>
<proteinExistence type="inferred from homology"/>
<evidence type="ECO:0000255" key="1">
    <source>
        <dbReference type="HAMAP-Rule" id="MF_00804"/>
    </source>
</evidence>
<feature type="chain" id="PRO_0000056551" description="Betaine aldehyde dehydrogenase">
    <location>
        <begin position="1"/>
        <end position="490"/>
    </location>
</feature>
<feature type="active site" description="Charge relay system" evidence="1">
    <location>
        <position position="162"/>
    </location>
</feature>
<feature type="active site" description="Proton acceptor" evidence="1">
    <location>
        <position position="252"/>
    </location>
</feature>
<feature type="active site" description="Nucleophile" evidence="1">
    <location>
        <position position="286"/>
    </location>
</feature>
<feature type="active site" description="Charge relay system" evidence="1">
    <location>
        <position position="464"/>
    </location>
</feature>
<feature type="binding site" evidence="1">
    <location>
        <position position="27"/>
    </location>
    <ligand>
        <name>K(+)</name>
        <dbReference type="ChEBI" id="CHEBI:29103"/>
        <label>1</label>
    </ligand>
</feature>
<feature type="binding site" evidence="1">
    <location>
        <position position="93"/>
    </location>
    <ligand>
        <name>K(+)</name>
        <dbReference type="ChEBI" id="CHEBI:29103"/>
        <label>1</label>
    </ligand>
</feature>
<feature type="binding site" evidence="1">
    <location>
        <begin position="150"/>
        <end position="152"/>
    </location>
    <ligand>
        <name>NAD(+)</name>
        <dbReference type="ChEBI" id="CHEBI:57540"/>
    </ligand>
</feature>
<feature type="binding site" evidence="1">
    <location>
        <begin position="176"/>
        <end position="179"/>
    </location>
    <ligand>
        <name>NAD(+)</name>
        <dbReference type="ChEBI" id="CHEBI:57540"/>
    </ligand>
</feature>
<feature type="binding site" evidence="1">
    <location>
        <position position="180"/>
    </location>
    <ligand>
        <name>K(+)</name>
        <dbReference type="ChEBI" id="CHEBI:29103"/>
        <label>1</label>
    </ligand>
</feature>
<feature type="binding site" evidence="1">
    <location>
        <begin position="230"/>
        <end position="233"/>
    </location>
    <ligand>
        <name>NAD(+)</name>
        <dbReference type="ChEBI" id="CHEBI:57540"/>
    </ligand>
</feature>
<feature type="binding site" evidence="1">
    <location>
        <position position="246"/>
    </location>
    <ligand>
        <name>K(+)</name>
        <dbReference type="ChEBI" id="CHEBI:29103"/>
        <label>2</label>
    </ligand>
</feature>
<feature type="binding site" evidence="1">
    <location>
        <position position="254"/>
    </location>
    <ligand>
        <name>NAD(+)</name>
        <dbReference type="ChEBI" id="CHEBI:57540"/>
    </ligand>
</feature>
<feature type="binding site" description="covalent" evidence="1">
    <location>
        <position position="286"/>
    </location>
    <ligand>
        <name>NAD(+)</name>
        <dbReference type="ChEBI" id="CHEBI:57540"/>
    </ligand>
</feature>
<feature type="binding site" evidence="1">
    <location>
        <position position="387"/>
    </location>
    <ligand>
        <name>NAD(+)</name>
        <dbReference type="ChEBI" id="CHEBI:57540"/>
    </ligand>
</feature>
<feature type="binding site" evidence="1">
    <location>
        <position position="457"/>
    </location>
    <ligand>
        <name>K(+)</name>
        <dbReference type="ChEBI" id="CHEBI:29103"/>
        <label>2</label>
    </ligand>
</feature>
<feature type="binding site" evidence="1">
    <location>
        <position position="460"/>
    </location>
    <ligand>
        <name>K(+)</name>
        <dbReference type="ChEBI" id="CHEBI:29103"/>
        <label>2</label>
    </ligand>
</feature>
<feature type="site" description="Seems to be a necessary countercharge to the potassium cations" evidence="1">
    <location>
        <position position="248"/>
    </location>
</feature>
<feature type="modified residue" description="Cysteine sulfenic acid (-SOH)" evidence="1">
    <location>
        <position position="286"/>
    </location>
</feature>
<reference key="1">
    <citation type="journal article" date="2005" name="Proc. Natl. Acad. Sci. U.S.A.">
        <title>Comparison of the complete genome sequences of Pseudomonas syringae pv. syringae B728a and pv. tomato DC3000.</title>
        <authorList>
            <person name="Feil H."/>
            <person name="Feil W.S."/>
            <person name="Chain P."/>
            <person name="Larimer F."/>
            <person name="Dibartolo G."/>
            <person name="Copeland A."/>
            <person name="Lykidis A."/>
            <person name="Trong S."/>
            <person name="Nolan M."/>
            <person name="Goltsman E."/>
            <person name="Thiel J."/>
            <person name="Malfatti S."/>
            <person name="Loper J.E."/>
            <person name="Lapidus A."/>
            <person name="Detter J.C."/>
            <person name="Land M."/>
            <person name="Richardson P.M."/>
            <person name="Kyrpides N.C."/>
            <person name="Ivanova N."/>
            <person name="Lindow S.E."/>
        </authorList>
    </citation>
    <scope>NUCLEOTIDE SEQUENCE [LARGE SCALE GENOMIC DNA]</scope>
    <source>
        <strain>B728a</strain>
    </source>
</reference>
<accession>Q4ZM62</accession>
<gene>
    <name evidence="1" type="primary">betB</name>
    <name type="ordered locus">Psyr_4733</name>
</gene>